<feature type="chain" id="PRO_1000185012" description="Putative regulatory protein BCQ_3657">
    <location>
        <begin position="1"/>
        <end position="87"/>
    </location>
</feature>
<evidence type="ECO:0000255" key="1">
    <source>
        <dbReference type="HAMAP-Rule" id="MF_01503"/>
    </source>
</evidence>
<dbReference type="EMBL" id="CP000227">
    <property type="protein sequence ID" value="ACM14085.1"/>
    <property type="molecule type" value="Genomic_DNA"/>
</dbReference>
<dbReference type="SMR" id="B9IVU8"/>
<dbReference type="KEGG" id="bcq:BCQ_3657"/>
<dbReference type="HOGENOM" id="CLU_165326_0_0_9"/>
<dbReference type="Proteomes" id="UP000000441">
    <property type="component" value="Chromosome"/>
</dbReference>
<dbReference type="HAMAP" id="MF_01503">
    <property type="entry name" value="RemA"/>
    <property type="match status" value="1"/>
</dbReference>
<dbReference type="InterPro" id="IPR007169">
    <property type="entry name" value="RemA-like"/>
</dbReference>
<dbReference type="NCBIfam" id="NF046064">
    <property type="entry name" value="MtxBflmRegRemA"/>
    <property type="match status" value="1"/>
</dbReference>
<dbReference type="NCBIfam" id="NF003315">
    <property type="entry name" value="PRK04323.1"/>
    <property type="match status" value="1"/>
</dbReference>
<dbReference type="PANTHER" id="PTHR38449:SF1">
    <property type="entry name" value="REGULATORY PROTEIN SSL2874-RELATED"/>
    <property type="match status" value="1"/>
</dbReference>
<dbReference type="PANTHER" id="PTHR38449">
    <property type="entry name" value="REGULATORY PROTEIN TM_1690-RELATED"/>
    <property type="match status" value="1"/>
</dbReference>
<dbReference type="Pfam" id="PF04025">
    <property type="entry name" value="RemA-like"/>
    <property type="match status" value="1"/>
</dbReference>
<comment type="similarity">
    <text evidence="1">Belongs to the RemA family.</text>
</comment>
<accession>B9IVU8</accession>
<proteinExistence type="inferred from homology"/>
<reference key="1">
    <citation type="journal article" date="2009" name="J. Bacteriol.">
        <title>Complete genome sequence of the extremophilic Bacillus cereus strain Q1 with industrial applications.</title>
        <authorList>
            <person name="Xiong Z."/>
            <person name="Jiang Y."/>
            <person name="Qi D."/>
            <person name="Lu H."/>
            <person name="Yang F."/>
            <person name="Yang J."/>
            <person name="Chen L."/>
            <person name="Sun L."/>
            <person name="Xu X."/>
            <person name="Xue Y."/>
            <person name="Zhu Y."/>
            <person name="Jin Q."/>
        </authorList>
    </citation>
    <scope>NUCLEOTIDE SEQUENCE [LARGE SCALE GENOMIC DNA]</scope>
    <source>
        <strain>Q1</strain>
    </source>
</reference>
<gene>
    <name type="ordered locus">BCQ_3657</name>
</gene>
<sequence>MAMRFLNIGYGNIVSAHRIIAIVSPESAPIKRTVQEAREHNALLDATYGRKTRAVIVMDDGHVVLSPIQPETIAHRLNNKEELSEEG</sequence>
<name>Y3657_BACCQ</name>
<organism>
    <name type="scientific">Bacillus cereus (strain Q1)</name>
    <dbReference type="NCBI Taxonomy" id="361100"/>
    <lineage>
        <taxon>Bacteria</taxon>
        <taxon>Bacillati</taxon>
        <taxon>Bacillota</taxon>
        <taxon>Bacilli</taxon>
        <taxon>Bacillales</taxon>
        <taxon>Bacillaceae</taxon>
        <taxon>Bacillus</taxon>
        <taxon>Bacillus cereus group</taxon>
    </lineage>
</organism>
<protein>
    <recommendedName>
        <fullName evidence="1">Putative regulatory protein BCQ_3657</fullName>
    </recommendedName>
</protein>